<keyword id="KW-0067">ATP-binding</keyword>
<keyword id="KW-1003">Cell membrane</keyword>
<keyword id="KW-1015">Disulfide bond</keyword>
<keyword id="KW-0245">EGF-like domain</keyword>
<keyword id="KW-0325">Glycoprotein</keyword>
<keyword id="KW-0418">Kinase</keyword>
<keyword id="KW-0430">Lectin</keyword>
<keyword id="KW-0472">Membrane</keyword>
<keyword id="KW-0547">Nucleotide-binding</keyword>
<keyword id="KW-0675">Receptor</keyword>
<keyword id="KW-1185">Reference proteome</keyword>
<keyword id="KW-0723">Serine/threonine-protein kinase</keyword>
<keyword id="KW-0732">Signal</keyword>
<keyword id="KW-0808">Transferase</keyword>
<keyword id="KW-0812">Transmembrane</keyword>
<keyword id="KW-1133">Transmembrane helix</keyword>
<protein>
    <recommendedName>
        <fullName>G-type lectin S-receptor-like serine/threonine-protein kinase RLK1</fullName>
        <ecNumber>2.7.11.1</ecNumber>
    </recommendedName>
    <alternativeName>
        <fullName>Receptor-like protein kinase 1</fullName>
    </alternativeName>
</protein>
<dbReference type="EC" id="2.7.11.1"/>
<dbReference type="EMBL" id="M84658">
    <property type="protein sequence ID" value="AAA32857.1"/>
    <property type="molecule type" value="mRNA"/>
</dbReference>
<dbReference type="EMBL" id="U66462">
    <property type="protein sequence ID" value="AAC16898.1"/>
    <property type="molecule type" value="Genomic_DNA"/>
</dbReference>
<dbReference type="EMBL" id="AB008269">
    <property type="status" value="NOT_ANNOTATED_CDS"/>
    <property type="molecule type" value="Genomic_DNA"/>
</dbReference>
<dbReference type="EMBL" id="CP002688">
    <property type="protein sequence ID" value="AED97394.2"/>
    <property type="molecule type" value="Genomic_DNA"/>
</dbReference>
<dbReference type="EMBL" id="AF083720">
    <property type="protein sequence ID" value="AAN60278.1"/>
    <property type="molecule type" value="mRNA"/>
</dbReference>
<dbReference type="PIR" id="S27754">
    <property type="entry name" value="S27754"/>
</dbReference>
<dbReference type="RefSeq" id="NP_001318851.1">
    <property type="nucleotide sequence ID" value="NM_001345434.1"/>
</dbReference>
<dbReference type="SMR" id="Q39202"/>
<dbReference type="FunCoup" id="Q39202">
    <property type="interactions" value="74"/>
</dbReference>
<dbReference type="STRING" id="3702.Q39202"/>
<dbReference type="GlyCosmos" id="Q39202">
    <property type="glycosylation" value="8 sites, No reported glycans"/>
</dbReference>
<dbReference type="GlyGen" id="Q39202">
    <property type="glycosylation" value="8 sites"/>
</dbReference>
<dbReference type="PeptideAtlas" id="Q39202"/>
<dbReference type="GeneID" id="836211"/>
<dbReference type="KEGG" id="ath:AT5G60900"/>
<dbReference type="Araport" id="AT5G60900"/>
<dbReference type="TAIR" id="AT5G60900"/>
<dbReference type="InParanoid" id="Q39202"/>
<dbReference type="PRO" id="PR:Q39202"/>
<dbReference type="Proteomes" id="UP000006548">
    <property type="component" value="Chromosome 5"/>
</dbReference>
<dbReference type="ExpressionAtlas" id="Q39202">
    <property type="expression patterns" value="baseline and differential"/>
</dbReference>
<dbReference type="GO" id="GO:0005886">
    <property type="term" value="C:plasma membrane"/>
    <property type="evidence" value="ECO:0007669"/>
    <property type="project" value="UniProtKB-SubCell"/>
</dbReference>
<dbReference type="GO" id="GO:0005524">
    <property type="term" value="F:ATP binding"/>
    <property type="evidence" value="ECO:0007669"/>
    <property type="project" value="UniProtKB-KW"/>
</dbReference>
<dbReference type="GO" id="GO:0005516">
    <property type="term" value="F:calmodulin binding"/>
    <property type="evidence" value="ECO:0000250"/>
    <property type="project" value="UniProtKB"/>
</dbReference>
<dbReference type="GO" id="GO:0030246">
    <property type="term" value="F:carbohydrate binding"/>
    <property type="evidence" value="ECO:0007669"/>
    <property type="project" value="UniProtKB-KW"/>
</dbReference>
<dbReference type="GO" id="GO:0004672">
    <property type="term" value="F:protein kinase activity"/>
    <property type="evidence" value="ECO:0000318"/>
    <property type="project" value="GO_Central"/>
</dbReference>
<dbReference type="GO" id="GO:0106310">
    <property type="term" value="F:protein serine kinase activity"/>
    <property type="evidence" value="ECO:0007669"/>
    <property type="project" value="RHEA"/>
</dbReference>
<dbReference type="GO" id="GO:0004674">
    <property type="term" value="F:protein serine/threonine kinase activity"/>
    <property type="evidence" value="ECO:0000250"/>
    <property type="project" value="UniProtKB"/>
</dbReference>
<dbReference type="GO" id="GO:0031625">
    <property type="term" value="F:ubiquitin protein ligase binding"/>
    <property type="evidence" value="ECO:0007669"/>
    <property type="project" value="UniProtKB-ARBA"/>
</dbReference>
<dbReference type="CDD" id="cd00028">
    <property type="entry name" value="B_lectin"/>
    <property type="match status" value="1"/>
</dbReference>
<dbReference type="CDD" id="cd01098">
    <property type="entry name" value="PAN_AP_plant"/>
    <property type="match status" value="1"/>
</dbReference>
<dbReference type="FunFam" id="1.10.510.10:FF:000237">
    <property type="entry name" value="G-type lectin S-receptor-like serine/threonine-protein kinase"/>
    <property type="match status" value="1"/>
</dbReference>
<dbReference type="FunFam" id="2.90.10.10:FF:000013">
    <property type="entry name" value="G-type lectin S-receptor-like serine/threonine-protein kinase LECRK1"/>
    <property type="match status" value="1"/>
</dbReference>
<dbReference type="FunFam" id="2.90.10.10:FF:000053">
    <property type="entry name" value="G-type lectin S-receptor-like serine/threonine-protein kinase RLK1"/>
    <property type="match status" value="1"/>
</dbReference>
<dbReference type="FunFam" id="3.30.200.20:FF:000059">
    <property type="entry name" value="S-receptor-like serine/threonine-protein kinase"/>
    <property type="match status" value="1"/>
</dbReference>
<dbReference type="Gene3D" id="2.90.10.10">
    <property type="entry name" value="Bulb-type lectin domain"/>
    <property type="match status" value="2"/>
</dbReference>
<dbReference type="Gene3D" id="3.30.200.20">
    <property type="entry name" value="Phosphorylase Kinase, domain 1"/>
    <property type="match status" value="1"/>
</dbReference>
<dbReference type="Gene3D" id="1.10.510.10">
    <property type="entry name" value="Transferase(Phosphotransferase) domain 1"/>
    <property type="match status" value="1"/>
</dbReference>
<dbReference type="InterPro" id="IPR001480">
    <property type="entry name" value="Bulb-type_lectin_dom"/>
</dbReference>
<dbReference type="InterPro" id="IPR036426">
    <property type="entry name" value="Bulb-type_lectin_dom_sf"/>
</dbReference>
<dbReference type="InterPro" id="IPR051343">
    <property type="entry name" value="G-type_lectin_kinases/EP1-like"/>
</dbReference>
<dbReference type="InterPro" id="IPR011009">
    <property type="entry name" value="Kinase-like_dom_sf"/>
</dbReference>
<dbReference type="InterPro" id="IPR003609">
    <property type="entry name" value="Pan_app"/>
</dbReference>
<dbReference type="InterPro" id="IPR000719">
    <property type="entry name" value="Prot_kinase_dom"/>
</dbReference>
<dbReference type="InterPro" id="IPR017441">
    <property type="entry name" value="Protein_kinase_ATP_BS"/>
</dbReference>
<dbReference type="InterPro" id="IPR008271">
    <property type="entry name" value="Ser/Thr_kinase_AS"/>
</dbReference>
<dbReference type="InterPro" id="IPR024171">
    <property type="entry name" value="SRK-like_kinase"/>
</dbReference>
<dbReference type="PANTHER" id="PTHR47976">
    <property type="entry name" value="G-TYPE LECTIN S-RECEPTOR-LIKE SERINE/THREONINE-PROTEIN KINASE SD2-5"/>
    <property type="match status" value="1"/>
</dbReference>
<dbReference type="PANTHER" id="PTHR47976:SF15">
    <property type="entry name" value="G-TYPE LECTIN S-RECEPTOR-LIKE SERINE_THREONINE-PROTEIN KINASE RLK1"/>
    <property type="match status" value="1"/>
</dbReference>
<dbReference type="Pfam" id="PF01453">
    <property type="entry name" value="B_lectin"/>
    <property type="match status" value="1"/>
</dbReference>
<dbReference type="Pfam" id="PF08276">
    <property type="entry name" value="PAN_2"/>
    <property type="match status" value="1"/>
</dbReference>
<dbReference type="Pfam" id="PF00069">
    <property type="entry name" value="Pkinase"/>
    <property type="match status" value="1"/>
</dbReference>
<dbReference type="PIRSF" id="PIRSF000641">
    <property type="entry name" value="SRK"/>
    <property type="match status" value="1"/>
</dbReference>
<dbReference type="SMART" id="SM00108">
    <property type="entry name" value="B_lectin"/>
    <property type="match status" value="1"/>
</dbReference>
<dbReference type="SMART" id="SM00220">
    <property type="entry name" value="S_TKc"/>
    <property type="match status" value="1"/>
</dbReference>
<dbReference type="SUPFAM" id="SSF51110">
    <property type="entry name" value="alpha-D-mannose-specific plant lectins"/>
    <property type="match status" value="1"/>
</dbReference>
<dbReference type="SUPFAM" id="SSF56112">
    <property type="entry name" value="Protein kinase-like (PK-like)"/>
    <property type="match status" value="1"/>
</dbReference>
<dbReference type="PROSITE" id="PS50927">
    <property type="entry name" value="BULB_LECTIN"/>
    <property type="match status" value="1"/>
</dbReference>
<dbReference type="PROSITE" id="PS00107">
    <property type="entry name" value="PROTEIN_KINASE_ATP"/>
    <property type="match status" value="1"/>
</dbReference>
<dbReference type="PROSITE" id="PS50011">
    <property type="entry name" value="PROTEIN_KINASE_DOM"/>
    <property type="match status" value="1"/>
</dbReference>
<dbReference type="PROSITE" id="PS00108">
    <property type="entry name" value="PROTEIN_KINASE_ST"/>
    <property type="match status" value="1"/>
</dbReference>
<gene>
    <name type="primary">RLK1</name>
    <name type="ordered locus">At5g60900</name>
    <name type="ORF">MSL3.2</name>
</gene>
<feature type="signal peptide" evidence="2">
    <location>
        <begin position="1"/>
        <end position="24"/>
    </location>
</feature>
<feature type="chain" id="PRO_5000143617" description="G-type lectin S-receptor-like serine/threonine-protein kinase RLK1">
    <location>
        <begin position="25"/>
        <end position="832"/>
    </location>
</feature>
<feature type="topological domain" description="Extracellular" evidence="2">
    <location>
        <begin position="25"/>
        <end position="461"/>
    </location>
</feature>
<feature type="transmembrane region" description="Helical" evidence="2">
    <location>
        <begin position="462"/>
        <end position="482"/>
    </location>
</feature>
<feature type="topological domain" description="Cytoplasmic" evidence="2">
    <location>
        <begin position="483"/>
        <end position="832"/>
    </location>
</feature>
<feature type="domain" description="Bulb-type lectin" evidence="3">
    <location>
        <begin position="37"/>
        <end position="157"/>
    </location>
</feature>
<feature type="domain" description="EGF-like; atypical" evidence="8">
    <location>
        <begin position="299"/>
        <end position="349"/>
    </location>
</feature>
<feature type="domain" description="PAN">
    <location>
        <begin position="357"/>
        <end position="446"/>
    </location>
</feature>
<feature type="domain" description="Protein kinase" evidence="5">
    <location>
        <begin position="531"/>
        <end position="803"/>
    </location>
</feature>
<feature type="region of interest" description="CaM-binding" evidence="1">
    <location>
        <begin position="622"/>
        <end position="638"/>
    </location>
</feature>
<feature type="active site" description="Proton acceptor" evidence="5 7">
    <location>
        <position position="657"/>
    </location>
</feature>
<feature type="binding site" evidence="5">
    <location>
        <begin position="537"/>
        <end position="545"/>
    </location>
    <ligand>
        <name>ATP</name>
        <dbReference type="ChEBI" id="CHEBI:30616"/>
    </ligand>
</feature>
<feature type="binding site" evidence="5">
    <location>
        <position position="563"/>
    </location>
    <ligand>
        <name>ATP</name>
        <dbReference type="ChEBI" id="CHEBI:30616"/>
    </ligand>
</feature>
<feature type="glycosylation site" description="N-linked (GlcNAc...) asparagine" evidence="2">
    <location>
        <position position="29"/>
    </location>
</feature>
<feature type="glycosylation site" description="N-linked (GlcNAc...) asparagine" evidence="2">
    <location>
        <position position="92"/>
    </location>
</feature>
<feature type="glycosylation site" description="N-linked (GlcNAc...) asparagine" evidence="2">
    <location>
        <position position="100"/>
    </location>
</feature>
<feature type="glycosylation site" description="N-linked (GlcNAc...) asparagine" evidence="2">
    <location>
        <position position="178"/>
    </location>
</feature>
<feature type="glycosylation site" description="N-linked (GlcNAc...) asparagine" evidence="2">
    <location>
        <position position="240"/>
    </location>
</feature>
<feature type="glycosylation site" description="N-linked (GlcNAc...) asparagine" evidence="2">
    <location>
        <position position="251"/>
    </location>
</feature>
<feature type="glycosylation site" description="N-linked (GlcNAc...) asparagine" evidence="2">
    <location>
        <position position="361"/>
    </location>
</feature>
<feature type="glycosylation site" description="N-linked (GlcNAc...) asparagine" evidence="2">
    <location>
        <position position="446"/>
    </location>
</feature>
<feature type="disulfide bond" evidence="4">
    <location>
        <begin position="303"/>
        <end position="320"/>
    </location>
</feature>
<feature type="disulfide bond" evidence="4">
    <location>
        <begin position="314"/>
        <end position="330"/>
    </location>
</feature>
<feature type="disulfide bond" evidence="4">
    <location>
        <begin position="332"/>
        <end position="348"/>
    </location>
</feature>
<feature type="disulfide bond" evidence="6">
    <location>
        <begin position="397"/>
        <end position="420"/>
    </location>
</feature>
<feature type="disulfide bond" evidence="6">
    <location>
        <begin position="401"/>
        <end position="407"/>
    </location>
</feature>
<feature type="sequence conflict" description="In Ref. 4; AAN60278." evidence="8" ref="4">
    <original>I</original>
    <variation>M</variation>
    <location>
        <position position="84"/>
    </location>
</feature>
<feature type="sequence conflict" description="In Ref. 1; AAA32857." evidence="8" ref="1">
    <original>T</original>
    <variation>R</variation>
    <location>
        <position position="696"/>
    </location>
</feature>
<comment type="catalytic activity">
    <reaction>
        <text>L-seryl-[protein] + ATP = O-phospho-L-seryl-[protein] + ADP + H(+)</text>
        <dbReference type="Rhea" id="RHEA:17989"/>
        <dbReference type="Rhea" id="RHEA-COMP:9863"/>
        <dbReference type="Rhea" id="RHEA-COMP:11604"/>
        <dbReference type="ChEBI" id="CHEBI:15378"/>
        <dbReference type="ChEBI" id="CHEBI:29999"/>
        <dbReference type="ChEBI" id="CHEBI:30616"/>
        <dbReference type="ChEBI" id="CHEBI:83421"/>
        <dbReference type="ChEBI" id="CHEBI:456216"/>
        <dbReference type="EC" id="2.7.11.1"/>
    </reaction>
</comment>
<comment type="catalytic activity">
    <reaction>
        <text>L-threonyl-[protein] + ATP = O-phospho-L-threonyl-[protein] + ADP + H(+)</text>
        <dbReference type="Rhea" id="RHEA:46608"/>
        <dbReference type="Rhea" id="RHEA-COMP:11060"/>
        <dbReference type="Rhea" id="RHEA-COMP:11605"/>
        <dbReference type="ChEBI" id="CHEBI:15378"/>
        <dbReference type="ChEBI" id="CHEBI:30013"/>
        <dbReference type="ChEBI" id="CHEBI:30616"/>
        <dbReference type="ChEBI" id="CHEBI:61977"/>
        <dbReference type="ChEBI" id="CHEBI:456216"/>
        <dbReference type="EC" id="2.7.11.1"/>
    </reaction>
</comment>
<comment type="subcellular location">
    <subcellularLocation>
        <location evidence="1">Cell membrane</location>
        <topology evidence="1">Single-pass type I membrane protein</topology>
    </subcellularLocation>
</comment>
<comment type="similarity">
    <text evidence="5">Belongs to the protein kinase superfamily. Ser/Thr protein kinase family.</text>
</comment>
<comment type="sequence caution" evidence="8">
    <conflict type="frameshift">
        <sequence resource="EMBL" id="AB008269"/>
    </conflict>
</comment>
<organism>
    <name type="scientific">Arabidopsis thaliana</name>
    <name type="common">Mouse-ear cress</name>
    <dbReference type="NCBI Taxonomy" id="3702"/>
    <lineage>
        <taxon>Eukaryota</taxon>
        <taxon>Viridiplantae</taxon>
        <taxon>Streptophyta</taxon>
        <taxon>Embryophyta</taxon>
        <taxon>Tracheophyta</taxon>
        <taxon>Spermatophyta</taxon>
        <taxon>Magnoliopsida</taxon>
        <taxon>eudicotyledons</taxon>
        <taxon>Gunneridae</taxon>
        <taxon>Pentapetalae</taxon>
        <taxon>rosids</taxon>
        <taxon>malvids</taxon>
        <taxon>Brassicales</taxon>
        <taxon>Brassicaceae</taxon>
        <taxon>Camelineae</taxon>
        <taxon>Arabidopsis</taxon>
    </lineage>
</organism>
<evidence type="ECO:0000250" key="1"/>
<evidence type="ECO:0000255" key="2"/>
<evidence type="ECO:0000255" key="3">
    <source>
        <dbReference type="PROSITE-ProRule" id="PRU00038"/>
    </source>
</evidence>
<evidence type="ECO:0000255" key="4">
    <source>
        <dbReference type="PROSITE-ProRule" id="PRU00076"/>
    </source>
</evidence>
<evidence type="ECO:0000255" key="5">
    <source>
        <dbReference type="PROSITE-ProRule" id="PRU00159"/>
    </source>
</evidence>
<evidence type="ECO:0000255" key="6">
    <source>
        <dbReference type="PROSITE-ProRule" id="PRU00315"/>
    </source>
</evidence>
<evidence type="ECO:0000255" key="7">
    <source>
        <dbReference type="PROSITE-ProRule" id="PRU10027"/>
    </source>
</evidence>
<evidence type="ECO:0000305" key="8"/>
<sequence>MGSLSCSIIHLVLILQLQTFFVFSQNIRNGSVPVGESLTASESQQISSSWRSPSGDFAFGFRKIQPNDGFTLSIWFDKISDKTIVWHAQAVNTTTGLVPNGSKVTLTADGGLVIADPRGQELWRALSGGSVSRGRFTDDGNFVLFRDGSEDSDEVLWSSFENPTDTLLPNQNIEVGRNLSSRRTETSFKKGRFSLRLEDDGNLQLHSLNAETASESDIYSQYYESNTNDPNNPGIQLVFNQSGEIYVLQRNNSRFVVKDRDPDFSIAAPFYISTGFLLSTIIPKEARRIVGGCLLGLCRDNMCSPDDALGNMACGYNNICSLGNNKRPKCECPERFVLKDPSNEYGDCLPDFEMQTCRPENQTANSDVNLYEFITLEKTNWPFGDYESYANYDEERCKASCLSDCLCAAVIFGTNRDLKCWKKKFPLSHGERSPRGDSDTFIKVRNRSIADVPVTGNRAKKLDWLIIACSVLLGTSAFVIFDTSCSYRKTKKSKNMMKNQARDIGRTTATTTANELNLRVFTYGELAEATRDFTEELGRGAFGIVYKGYLEVAGGSEVTVAVKKLDRLDLDNEKEFKNEVKVIGQIHHKNLVRLIGFCNEGQSQMIVYEFLPQGTLANFLFRRPRPSWEDRKNIAVAIARGILYLHEECSEQIIHCDIKPQNILLDEYYTPRISDFGLAKLLLMNQTYTLTNIRGTKGYVAPEWFRNSPITSKVDVYSYGVMLLEIVCCKKAVDLEDNVILINWAYDCFRQGRLEDLTEDDSEAMNDMETVERYVKIAIWCIQEEHGMRPNMRNVTQMLEGVIQVFDPPNPSPYSTFTWSDESLSSDPVSLV</sequence>
<accession>Q39202</accession>
<accession>F4K0I9</accession>
<accession>Q8H7E0</accession>
<accession>Q9SAR9</accession>
<reference key="1">
    <citation type="journal article" date="1993" name="Plant J.">
        <title>Receptor-like protein kinase genes of Arabidopsis thaliana.</title>
        <authorList>
            <person name="Walker J.C."/>
        </authorList>
    </citation>
    <scope>NUCLEOTIDE SEQUENCE [MRNA]</scope>
    <scope>NUCLEOTIDE SEQUENCE [GENOMIC DNA] OF 733-832</scope>
    <source>
        <strain>cv. Columbia</strain>
    </source>
</reference>
<reference key="2">
    <citation type="journal article" date="1997" name="DNA Res.">
        <title>Structural analysis of Arabidopsis thaliana chromosome 5. III. Sequence features of the regions of 1,191,918 bp covered by seventeen physically assigned P1 clones.</title>
        <authorList>
            <person name="Nakamura Y."/>
            <person name="Sato S."/>
            <person name="Kaneko T."/>
            <person name="Kotani H."/>
            <person name="Asamizu E."/>
            <person name="Miyajima N."/>
            <person name="Tabata S."/>
        </authorList>
    </citation>
    <scope>NUCLEOTIDE SEQUENCE [LARGE SCALE GENOMIC DNA]</scope>
    <source>
        <strain>cv. Columbia</strain>
    </source>
</reference>
<reference key="3">
    <citation type="journal article" date="2017" name="Plant J.">
        <title>Araport11: a complete reannotation of the Arabidopsis thaliana reference genome.</title>
        <authorList>
            <person name="Cheng C.Y."/>
            <person name="Krishnakumar V."/>
            <person name="Chan A.P."/>
            <person name="Thibaud-Nissen F."/>
            <person name="Schobel S."/>
            <person name="Town C.D."/>
        </authorList>
    </citation>
    <scope>GENOME REANNOTATION</scope>
    <source>
        <strain>cv. Columbia</strain>
    </source>
</reference>
<reference key="4">
    <citation type="submission" date="1998-08" db="EMBL/GenBank/DDBJ databases">
        <title>Signal peptide selection derived cDNAs from Arabidopsis thaliana leaves and guard cells.</title>
        <authorList>
            <person name="Stracke R."/>
            <person name="Palme K."/>
        </authorList>
    </citation>
    <scope>NUCLEOTIDE SEQUENCE [MRNA] OF 1-243</scope>
</reference>
<name>RLK1_ARATH</name>
<proteinExistence type="evidence at transcript level"/>